<gene>
    <name type="ordered locus">At2g16220</name>
    <name type="ORF">F7H1.24</name>
</gene>
<dbReference type="EMBL" id="AC007134">
    <property type="protein sequence ID" value="AAM15403.1"/>
    <property type="molecule type" value="Genomic_DNA"/>
</dbReference>
<dbReference type="EMBL" id="CP002685">
    <property type="protein sequence ID" value="AEC06475.1"/>
    <property type="molecule type" value="Genomic_DNA"/>
</dbReference>
<dbReference type="EMBL" id="DQ446503">
    <property type="protein sequence ID" value="ABE65447.1"/>
    <property type="molecule type" value="Genomic_DNA"/>
</dbReference>
<dbReference type="PIR" id="A84538">
    <property type="entry name" value="A84538"/>
</dbReference>
<dbReference type="RefSeq" id="NP_179218.1">
    <property type="nucleotide sequence ID" value="NM_127179.1"/>
</dbReference>
<dbReference type="BioGRID" id="1478">
    <property type="interactions" value="3"/>
</dbReference>
<dbReference type="FunCoup" id="Q8S8C7">
    <property type="interactions" value="45"/>
</dbReference>
<dbReference type="PaxDb" id="3702-AT2G16220.1"/>
<dbReference type="EnsemblPlants" id="AT2G16220.1">
    <property type="protein sequence ID" value="AT2G16220.1"/>
    <property type="gene ID" value="AT2G16220"/>
</dbReference>
<dbReference type="GeneID" id="816119"/>
<dbReference type="Gramene" id="AT2G16220.1">
    <property type="protein sequence ID" value="AT2G16220.1"/>
    <property type="gene ID" value="AT2G16220"/>
</dbReference>
<dbReference type="KEGG" id="ath:AT2G16220"/>
<dbReference type="Araport" id="AT2G16220"/>
<dbReference type="TAIR" id="AT2G16220"/>
<dbReference type="HOGENOM" id="CLU_027176_9_0_1"/>
<dbReference type="InParanoid" id="Q8S8C7"/>
<dbReference type="OMA" id="YSTRICI"/>
<dbReference type="PhylomeDB" id="Q8S8C7"/>
<dbReference type="PRO" id="PR:Q8S8C7"/>
<dbReference type="Proteomes" id="UP000006548">
    <property type="component" value="Chromosome 2"/>
</dbReference>
<dbReference type="ExpressionAtlas" id="Q8S8C7">
    <property type="expression patterns" value="baseline and differential"/>
</dbReference>
<dbReference type="GO" id="GO:0046685">
    <property type="term" value="P:response to arsenic-containing substance"/>
    <property type="evidence" value="ECO:0000315"/>
    <property type="project" value="TAIR"/>
</dbReference>
<dbReference type="CDD" id="cd22157">
    <property type="entry name" value="F-box_AtFBW1-like"/>
    <property type="match status" value="1"/>
</dbReference>
<dbReference type="Gene3D" id="1.20.1280.50">
    <property type="match status" value="1"/>
</dbReference>
<dbReference type="InterPro" id="IPR013187">
    <property type="entry name" value="F-box-assoc_dom_typ3"/>
</dbReference>
<dbReference type="InterPro" id="IPR017451">
    <property type="entry name" value="F-box-assoc_interact_dom"/>
</dbReference>
<dbReference type="InterPro" id="IPR036047">
    <property type="entry name" value="F-box-like_dom_sf"/>
</dbReference>
<dbReference type="InterPro" id="IPR001810">
    <property type="entry name" value="F-box_dom"/>
</dbReference>
<dbReference type="NCBIfam" id="TIGR01640">
    <property type="entry name" value="F_box_assoc_1"/>
    <property type="match status" value="1"/>
</dbReference>
<dbReference type="PANTHER" id="PTHR31111">
    <property type="entry name" value="BNAA05G37150D PROTEIN-RELATED"/>
    <property type="match status" value="1"/>
</dbReference>
<dbReference type="PANTHER" id="PTHR31111:SF130">
    <property type="entry name" value="F-BOX ASSOCIATED UBIQUITINATION EFFECTOR FAMILY PROTEIN"/>
    <property type="match status" value="1"/>
</dbReference>
<dbReference type="Pfam" id="PF00646">
    <property type="entry name" value="F-box"/>
    <property type="match status" value="1"/>
</dbReference>
<dbReference type="Pfam" id="PF08268">
    <property type="entry name" value="FBA_3"/>
    <property type="match status" value="1"/>
</dbReference>
<dbReference type="SMART" id="SM00256">
    <property type="entry name" value="FBOX"/>
    <property type="match status" value="1"/>
</dbReference>
<dbReference type="SUPFAM" id="SSF81383">
    <property type="entry name" value="F-box domain"/>
    <property type="match status" value="1"/>
</dbReference>
<feature type="chain" id="PRO_0000283378" description="Putative F-box protein At2g16220">
    <location>
        <begin position="1"/>
        <end position="407"/>
    </location>
</feature>
<feature type="domain" description="F-box">
    <location>
        <begin position="1"/>
        <end position="45"/>
    </location>
</feature>
<feature type="region of interest" description="Disordered" evidence="1">
    <location>
        <begin position="385"/>
        <end position="407"/>
    </location>
</feature>
<feature type="compositionally biased region" description="Acidic residues" evidence="1">
    <location>
        <begin position="391"/>
        <end position="407"/>
    </location>
</feature>
<name>FB105_ARATH</name>
<proteinExistence type="predicted"/>
<accession>Q8S8C7</accession>
<protein>
    <recommendedName>
        <fullName>Putative F-box protein At2g16220</fullName>
    </recommendedName>
</protein>
<evidence type="ECO:0000256" key="1">
    <source>
        <dbReference type="SAM" id="MobiDB-lite"/>
    </source>
</evidence>
<sequence>MNSHFLTNDLILEVLSRLPLKSVARFHCVSKRWASMFGSPYFKELFLTRSSAKPRLLFAIVQNGVWRFFSSPRLEKSSSTLVATAEFHMKLSPNNLRIYHDNTPRYFSIGYASGLIYLYGDRYEATPLICNPNTGRYTILPKCYTYRKAFSFFGFDPIDKQYKALSMIYPSGPGHSKILTFGDGDMNWKKIKYRVLHDIYSQGICINGVLYYLGDTSDWDNDHDVTSGNVLVCFDLRSESFTFIGLECGQLINYKGKLAVIFWDDVDDDDVKDDAIDEMHVWVLEDVEKKEWSKYAYTWTEDKLYRSQVSVVGMTASGEIVFSMRKYTSEQPFYVYYFNPERNNLRRVEIQGFEAFTKFGTVYTFVDHVEDLNVYNLKHFKSVHPPSVQPEYDESDSESEEDREIII</sequence>
<organism>
    <name type="scientific">Arabidopsis thaliana</name>
    <name type="common">Mouse-ear cress</name>
    <dbReference type="NCBI Taxonomy" id="3702"/>
    <lineage>
        <taxon>Eukaryota</taxon>
        <taxon>Viridiplantae</taxon>
        <taxon>Streptophyta</taxon>
        <taxon>Embryophyta</taxon>
        <taxon>Tracheophyta</taxon>
        <taxon>Spermatophyta</taxon>
        <taxon>Magnoliopsida</taxon>
        <taxon>eudicotyledons</taxon>
        <taxon>Gunneridae</taxon>
        <taxon>Pentapetalae</taxon>
        <taxon>rosids</taxon>
        <taxon>malvids</taxon>
        <taxon>Brassicales</taxon>
        <taxon>Brassicaceae</taxon>
        <taxon>Camelineae</taxon>
        <taxon>Arabidopsis</taxon>
    </lineage>
</organism>
<reference key="1">
    <citation type="journal article" date="1999" name="Nature">
        <title>Sequence and analysis of chromosome 2 of the plant Arabidopsis thaliana.</title>
        <authorList>
            <person name="Lin X."/>
            <person name="Kaul S."/>
            <person name="Rounsley S.D."/>
            <person name="Shea T.P."/>
            <person name="Benito M.-I."/>
            <person name="Town C.D."/>
            <person name="Fujii C.Y."/>
            <person name="Mason T.M."/>
            <person name="Bowman C.L."/>
            <person name="Barnstead M.E."/>
            <person name="Feldblyum T.V."/>
            <person name="Buell C.R."/>
            <person name="Ketchum K.A."/>
            <person name="Lee J.J."/>
            <person name="Ronning C.M."/>
            <person name="Koo H.L."/>
            <person name="Moffat K.S."/>
            <person name="Cronin L.A."/>
            <person name="Shen M."/>
            <person name="Pai G."/>
            <person name="Van Aken S."/>
            <person name="Umayam L."/>
            <person name="Tallon L.J."/>
            <person name="Gill J.E."/>
            <person name="Adams M.D."/>
            <person name="Carrera A.J."/>
            <person name="Creasy T.H."/>
            <person name="Goodman H.M."/>
            <person name="Somerville C.R."/>
            <person name="Copenhaver G.P."/>
            <person name="Preuss D."/>
            <person name="Nierman W.C."/>
            <person name="White O."/>
            <person name="Eisen J.A."/>
            <person name="Salzberg S.L."/>
            <person name="Fraser C.M."/>
            <person name="Venter J.C."/>
        </authorList>
    </citation>
    <scope>NUCLEOTIDE SEQUENCE [LARGE SCALE GENOMIC DNA]</scope>
    <source>
        <strain>cv. Columbia</strain>
    </source>
</reference>
<reference key="2">
    <citation type="journal article" date="2017" name="Plant J.">
        <title>Araport11: a complete reannotation of the Arabidopsis thaliana reference genome.</title>
        <authorList>
            <person name="Cheng C.Y."/>
            <person name="Krishnakumar V."/>
            <person name="Chan A.P."/>
            <person name="Thibaud-Nissen F."/>
            <person name="Schobel S."/>
            <person name="Town C.D."/>
        </authorList>
    </citation>
    <scope>GENOME REANNOTATION</scope>
    <source>
        <strain>cv. Columbia</strain>
    </source>
</reference>
<reference key="3">
    <citation type="journal article" date="2006" name="Plant Biotechnol. J.">
        <title>Simultaneous high-throughput recombinational cloning of open reading frames in closed and open configurations.</title>
        <authorList>
            <person name="Underwood B.A."/>
            <person name="Vanderhaeghen R."/>
            <person name="Whitford R."/>
            <person name="Town C.D."/>
            <person name="Hilson P."/>
        </authorList>
    </citation>
    <scope>NUCLEOTIDE SEQUENCE [LARGE SCALE GENOMIC DNA]</scope>
    <source>
        <strain>cv. Columbia</strain>
    </source>
</reference>
<keyword id="KW-1185">Reference proteome</keyword>